<evidence type="ECO:0000250" key="1"/>
<evidence type="ECO:0000255" key="2"/>
<evidence type="ECO:0000255" key="3">
    <source>
        <dbReference type="PROSITE-ProRule" id="PRU00068"/>
    </source>
</evidence>
<evidence type="ECO:0000255" key="4">
    <source>
        <dbReference type="PROSITE-ProRule" id="PRU00076"/>
    </source>
</evidence>
<evidence type="ECO:0000255" key="5">
    <source>
        <dbReference type="PROSITE-ProRule" id="PRU00276"/>
    </source>
</evidence>
<evidence type="ECO:0000255" key="6">
    <source>
        <dbReference type="PROSITE-ProRule" id="PRU10095"/>
    </source>
</evidence>
<evidence type="ECO:0000305" key="7"/>
<sequence length="729" mass="80850">MECFIMLGADARTLMRVTLLLLWLKALPSLIDLSQTGSTQYLSSPEVVIPLKVTSRARGAKNSEWLSYSLVFGGRRHVVHMRVKKLLVSTHIPVLTYTEEHTPLSDYPFVPSDCYYHGYVEGALESLVAFSACNGGLQGVLQMNGFSYEIEPIKHSSTFEHLVYTLNNNKTQFPPMLCSLTEKRLLYQPFGVEEAKKSAMKQNYGKLWPHMWFLELAVVVDYGFFTNAQQNLSKVRGDVVLVVNMVDSMYKPLDTYVTLVGIEIWNRGNVLPMENIHQVLEDFSHWKQISLSQVHHDAAHIFIRSSLISVLGIAYIAGICRPPLDCGVENFQGDAWSLFANTVAHELGHTFGMKHDEESCSCGKSGCVMSTFRVPAERFTNCSYSDFMKTTLNQGTCLYNHPRPGAGFLVKRCGNGMVESEEECDCGSVQECEQDPCCFLNCTLRPAAACSFGLCCKDCKFMLLGELCRPKINECDLPEWCNGTSHQCPEDGYVQDGVPCGAGAYCYQKQCNNHDQQCREIFGKGARSASHNCYKEINLQGNRFGHCGTDGTVFLKCRMSDVFCGKVHCENVEDIHHPQAPYVLQNIYANGITCWSTGHCLGMGVPDVGEVKDGTTCGVGKICLHKKCVSLSVLSNACLPETCNRKGVCNNKHHCHCDYGWSPPFCLHRGYGGSIDSGPTSQKRRVIITVLSITVPVLSILICLLIAGLYRIYCKIPSGPKETKASSPG</sequence>
<keyword id="KW-1015">Disulfide bond</keyword>
<keyword id="KW-0245">EGF-like domain</keyword>
<keyword id="KW-0325">Glycoprotein</keyword>
<keyword id="KW-0378">Hydrolase</keyword>
<keyword id="KW-0472">Membrane</keyword>
<keyword id="KW-0479">Metal-binding</keyword>
<keyword id="KW-0482">Metalloprotease</keyword>
<keyword id="KW-0645">Protease</keyword>
<keyword id="KW-1185">Reference proteome</keyword>
<keyword id="KW-0732">Signal</keyword>
<keyword id="KW-0812">Transmembrane</keyword>
<keyword id="KW-1133">Transmembrane helix</keyword>
<keyword id="KW-0862">Zinc</keyword>
<keyword id="KW-0865">Zymogen</keyword>
<name>ADA21_MOUSE</name>
<proteinExistence type="evidence at transcript level"/>
<reference key="1">
    <citation type="journal article" date="2000" name="Endocrinology">
        <title>Identification of ADAM 31: a protein expressed in Leydig cells and specialized epithelia.</title>
        <authorList>
            <person name="Liu L."/>
            <person name="Smith J.W."/>
        </authorList>
    </citation>
    <scope>NUCLEOTIDE SEQUENCE [MRNA]</scope>
    <source>
        <strain>BALB/cJ</strain>
        <tissue>Bone marrow</tissue>
    </source>
</reference>
<reference key="2">
    <citation type="journal article" date="2005" name="Science">
        <title>The transcriptional landscape of the mammalian genome.</title>
        <authorList>
            <person name="Carninci P."/>
            <person name="Kasukawa T."/>
            <person name="Katayama S."/>
            <person name="Gough J."/>
            <person name="Frith M.C."/>
            <person name="Maeda N."/>
            <person name="Oyama R."/>
            <person name="Ravasi T."/>
            <person name="Lenhard B."/>
            <person name="Wells C."/>
            <person name="Kodzius R."/>
            <person name="Shimokawa K."/>
            <person name="Bajic V.B."/>
            <person name="Brenner S.E."/>
            <person name="Batalov S."/>
            <person name="Forrest A.R."/>
            <person name="Zavolan M."/>
            <person name="Davis M.J."/>
            <person name="Wilming L.G."/>
            <person name="Aidinis V."/>
            <person name="Allen J.E."/>
            <person name="Ambesi-Impiombato A."/>
            <person name="Apweiler R."/>
            <person name="Aturaliya R.N."/>
            <person name="Bailey T.L."/>
            <person name="Bansal M."/>
            <person name="Baxter L."/>
            <person name="Beisel K.W."/>
            <person name="Bersano T."/>
            <person name="Bono H."/>
            <person name="Chalk A.M."/>
            <person name="Chiu K.P."/>
            <person name="Choudhary V."/>
            <person name="Christoffels A."/>
            <person name="Clutterbuck D.R."/>
            <person name="Crowe M.L."/>
            <person name="Dalla E."/>
            <person name="Dalrymple B.P."/>
            <person name="de Bono B."/>
            <person name="Della Gatta G."/>
            <person name="di Bernardo D."/>
            <person name="Down T."/>
            <person name="Engstrom P."/>
            <person name="Fagiolini M."/>
            <person name="Faulkner G."/>
            <person name="Fletcher C.F."/>
            <person name="Fukushima T."/>
            <person name="Furuno M."/>
            <person name="Futaki S."/>
            <person name="Gariboldi M."/>
            <person name="Georgii-Hemming P."/>
            <person name="Gingeras T.R."/>
            <person name="Gojobori T."/>
            <person name="Green R.E."/>
            <person name="Gustincich S."/>
            <person name="Harbers M."/>
            <person name="Hayashi Y."/>
            <person name="Hensch T.K."/>
            <person name="Hirokawa N."/>
            <person name="Hill D."/>
            <person name="Huminiecki L."/>
            <person name="Iacono M."/>
            <person name="Ikeo K."/>
            <person name="Iwama A."/>
            <person name="Ishikawa T."/>
            <person name="Jakt M."/>
            <person name="Kanapin A."/>
            <person name="Katoh M."/>
            <person name="Kawasawa Y."/>
            <person name="Kelso J."/>
            <person name="Kitamura H."/>
            <person name="Kitano H."/>
            <person name="Kollias G."/>
            <person name="Krishnan S.P."/>
            <person name="Kruger A."/>
            <person name="Kummerfeld S.K."/>
            <person name="Kurochkin I.V."/>
            <person name="Lareau L.F."/>
            <person name="Lazarevic D."/>
            <person name="Lipovich L."/>
            <person name="Liu J."/>
            <person name="Liuni S."/>
            <person name="McWilliam S."/>
            <person name="Madan Babu M."/>
            <person name="Madera M."/>
            <person name="Marchionni L."/>
            <person name="Matsuda H."/>
            <person name="Matsuzawa S."/>
            <person name="Miki H."/>
            <person name="Mignone F."/>
            <person name="Miyake S."/>
            <person name="Morris K."/>
            <person name="Mottagui-Tabar S."/>
            <person name="Mulder N."/>
            <person name="Nakano N."/>
            <person name="Nakauchi H."/>
            <person name="Ng P."/>
            <person name="Nilsson R."/>
            <person name="Nishiguchi S."/>
            <person name="Nishikawa S."/>
            <person name="Nori F."/>
            <person name="Ohara O."/>
            <person name="Okazaki Y."/>
            <person name="Orlando V."/>
            <person name="Pang K.C."/>
            <person name="Pavan W.J."/>
            <person name="Pavesi G."/>
            <person name="Pesole G."/>
            <person name="Petrovsky N."/>
            <person name="Piazza S."/>
            <person name="Reed J."/>
            <person name="Reid J.F."/>
            <person name="Ring B.Z."/>
            <person name="Ringwald M."/>
            <person name="Rost B."/>
            <person name="Ruan Y."/>
            <person name="Salzberg S.L."/>
            <person name="Sandelin A."/>
            <person name="Schneider C."/>
            <person name="Schoenbach C."/>
            <person name="Sekiguchi K."/>
            <person name="Semple C.A."/>
            <person name="Seno S."/>
            <person name="Sessa L."/>
            <person name="Sheng Y."/>
            <person name="Shibata Y."/>
            <person name="Shimada H."/>
            <person name="Shimada K."/>
            <person name="Silva D."/>
            <person name="Sinclair B."/>
            <person name="Sperling S."/>
            <person name="Stupka E."/>
            <person name="Sugiura K."/>
            <person name="Sultana R."/>
            <person name="Takenaka Y."/>
            <person name="Taki K."/>
            <person name="Tammoja K."/>
            <person name="Tan S.L."/>
            <person name="Tang S."/>
            <person name="Taylor M.S."/>
            <person name="Tegner J."/>
            <person name="Teichmann S.A."/>
            <person name="Ueda H.R."/>
            <person name="van Nimwegen E."/>
            <person name="Verardo R."/>
            <person name="Wei C.L."/>
            <person name="Yagi K."/>
            <person name="Yamanishi H."/>
            <person name="Zabarovsky E."/>
            <person name="Zhu S."/>
            <person name="Zimmer A."/>
            <person name="Hide W."/>
            <person name="Bult C."/>
            <person name="Grimmond S.M."/>
            <person name="Teasdale R.D."/>
            <person name="Liu E.T."/>
            <person name="Brusic V."/>
            <person name="Quackenbush J."/>
            <person name="Wahlestedt C."/>
            <person name="Mattick J.S."/>
            <person name="Hume D.A."/>
            <person name="Kai C."/>
            <person name="Sasaki D."/>
            <person name="Tomaru Y."/>
            <person name="Fukuda S."/>
            <person name="Kanamori-Katayama M."/>
            <person name="Suzuki M."/>
            <person name="Aoki J."/>
            <person name="Arakawa T."/>
            <person name="Iida J."/>
            <person name="Imamura K."/>
            <person name="Itoh M."/>
            <person name="Kato T."/>
            <person name="Kawaji H."/>
            <person name="Kawagashira N."/>
            <person name="Kawashima T."/>
            <person name="Kojima M."/>
            <person name="Kondo S."/>
            <person name="Konno H."/>
            <person name="Nakano K."/>
            <person name="Ninomiya N."/>
            <person name="Nishio T."/>
            <person name="Okada M."/>
            <person name="Plessy C."/>
            <person name="Shibata K."/>
            <person name="Shiraki T."/>
            <person name="Suzuki S."/>
            <person name="Tagami M."/>
            <person name="Waki K."/>
            <person name="Watahiki A."/>
            <person name="Okamura-Oho Y."/>
            <person name="Suzuki H."/>
            <person name="Kawai J."/>
            <person name="Hayashizaki Y."/>
        </authorList>
    </citation>
    <scope>NUCLEOTIDE SEQUENCE [LARGE SCALE MRNA]</scope>
    <source>
        <strain>C57BL/6J</strain>
        <tissue>Testis</tissue>
    </source>
</reference>
<reference key="3">
    <citation type="journal article" date="2004" name="Genome Res.">
        <title>The status, quality, and expansion of the NIH full-length cDNA project: the Mammalian Gene Collection (MGC).</title>
        <authorList>
            <consortium name="The MGC Project Team"/>
        </authorList>
    </citation>
    <scope>NUCLEOTIDE SEQUENCE [LARGE SCALE MRNA]</scope>
    <source>
        <tissue>Brain</tissue>
    </source>
</reference>
<accession>Q9JI76</accession>
<accession>A2RSL1</accession>
<comment type="function">
    <text>May be involved in sperm maturation and/or fertilization. May also be involved in epithelia functions associated with establishing and maintaining gradients of ions or nutrients.</text>
</comment>
<comment type="cofactor">
    <cofactor evidence="7">
        <name>Zn(2+)</name>
        <dbReference type="ChEBI" id="CHEBI:29105"/>
    </cofactor>
    <text evidence="7">Binds 1 zinc ion per subunit.</text>
</comment>
<comment type="subcellular location">
    <subcellularLocation>
        <location>Membrane</location>
        <topology>Single-pass type I membrane protein</topology>
    </subcellularLocation>
</comment>
<comment type="tissue specificity">
    <text>Highly expressed in Leydig cells. Expressed also in cauda epididymidis, vas deferens, convoluted tubules, kidney and the parietal cells of stomach. Not detected on developing spermatocytes or mature sperm.</text>
</comment>
<comment type="domain">
    <text>A tripeptide motif (VGE) within disintegrin-like domain could be involved in the binding to egg integrin receptor and thus could mediate sperm/egg binding.</text>
</comment>
<comment type="domain">
    <text>The cysteine-rich domain encodes putative cell-fusion peptides, which could be involved in sperm-egg fusion.</text>
</comment>
<comment type="domain">
    <text>The conserved cysteine present in the cysteine-switch motif binds the catalytic zinc ion, thus inhibiting the enzyme. The dissociation of the cysteine from the zinc ion upon the activation-peptide release activates the enzyme.</text>
</comment>
<comment type="PTM">
    <text evidence="1">Has no obvious cleavage site for furin endopeptidase, suggesting that the proteolytic processing is regulated.</text>
</comment>
<dbReference type="EC" id="3.4.24.-"/>
<dbReference type="EMBL" id="AF251559">
    <property type="protein sequence ID" value="AAF74731.1"/>
    <property type="molecule type" value="mRNA"/>
</dbReference>
<dbReference type="EMBL" id="AK014827">
    <property type="protein sequence ID" value="BAB29569.1"/>
    <property type="molecule type" value="mRNA"/>
</dbReference>
<dbReference type="EMBL" id="BC132152">
    <property type="protein sequence ID" value="AAI32153.1"/>
    <property type="molecule type" value="mRNA"/>
</dbReference>
<dbReference type="EMBL" id="BC132344">
    <property type="protein sequence ID" value="AAI32345.1"/>
    <property type="molecule type" value="mRNA"/>
</dbReference>
<dbReference type="CCDS" id="CCDS26022.1"/>
<dbReference type="RefSeq" id="NP_065063.1">
    <property type="nucleotide sequence ID" value="NM_020330.5"/>
</dbReference>
<dbReference type="SMR" id="Q9JI76"/>
<dbReference type="FunCoup" id="Q9JI76">
    <property type="interactions" value="30"/>
</dbReference>
<dbReference type="STRING" id="10090.ENSMUSP00000008582"/>
<dbReference type="MEROPS" id="M12.233"/>
<dbReference type="GlyCosmos" id="Q9JI76">
    <property type="glycosylation" value="5 sites, No reported glycans"/>
</dbReference>
<dbReference type="GlyGen" id="Q9JI76">
    <property type="glycosylation" value="5 sites"/>
</dbReference>
<dbReference type="iPTMnet" id="Q9JI76"/>
<dbReference type="PhosphoSitePlus" id="Q9JI76"/>
<dbReference type="PaxDb" id="10090-ENSMUSP00000008582"/>
<dbReference type="ProteomicsDB" id="285756"/>
<dbReference type="Antibodypedia" id="25130">
    <property type="antibodies" value="36 antibodies from 17 providers"/>
</dbReference>
<dbReference type="DNASU" id="56622"/>
<dbReference type="Ensembl" id="ENSMUST00000008582.4">
    <property type="protein sequence ID" value="ENSMUSP00000008582.4"/>
    <property type="gene ID" value="ENSMUSG00000008438.4"/>
</dbReference>
<dbReference type="GeneID" id="56622"/>
<dbReference type="KEGG" id="mmu:56622"/>
<dbReference type="UCSC" id="uc007ock.1">
    <property type="organism name" value="mouse"/>
</dbReference>
<dbReference type="AGR" id="MGI:1861229"/>
<dbReference type="CTD" id="8747"/>
<dbReference type="MGI" id="MGI:1861229">
    <property type="gene designation" value="Adam21"/>
</dbReference>
<dbReference type="VEuPathDB" id="HostDB:ENSMUSG00000008438"/>
<dbReference type="eggNOG" id="KOG3607">
    <property type="taxonomic scope" value="Eukaryota"/>
</dbReference>
<dbReference type="GeneTree" id="ENSGT00940000162712"/>
<dbReference type="HOGENOM" id="CLU_012714_4_0_1"/>
<dbReference type="InParanoid" id="Q9JI76"/>
<dbReference type="OMA" id="WWTHSWF"/>
<dbReference type="OrthoDB" id="5951731at2759"/>
<dbReference type="PhylomeDB" id="Q9JI76"/>
<dbReference type="TreeFam" id="TF314733"/>
<dbReference type="Reactome" id="R-MMU-2534343">
    <property type="pathway name" value="Interaction With Cumulus Cells And The Zona Pellucida"/>
</dbReference>
<dbReference type="BioGRID-ORCS" id="56622">
    <property type="hits" value="2 hits in 76 CRISPR screens"/>
</dbReference>
<dbReference type="PRO" id="PR:Q9JI76"/>
<dbReference type="Proteomes" id="UP000000589">
    <property type="component" value="Chromosome 12"/>
</dbReference>
<dbReference type="RNAct" id="Q9JI76">
    <property type="molecule type" value="protein"/>
</dbReference>
<dbReference type="Bgee" id="ENSMUSG00000008438">
    <property type="expression patterns" value="Expressed in spermatid and 26 other cell types or tissues"/>
</dbReference>
<dbReference type="GO" id="GO:0030424">
    <property type="term" value="C:axon"/>
    <property type="evidence" value="ECO:0000314"/>
    <property type="project" value="MGI"/>
</dbReference>
<dbReference type="GO" id="GO:0016020">
    <property type="term" value="C:membrane"/>
    <property type="evidence" value="ECO:0007669"/>
    <property type="project" value="UniProtKB-SubCell"/>
</dbReference>
<dbReference type="GO" id="GO:0043005">
    <property type="term" value="C:neuron projection"/>
    <property type="evidence" value="ECO:0000314"/>
    <property type="project" value="MGI"/>
</dbReference>
<dbReference type="GO" id="GO:0043025">
    <property type="term" value="C:neuronal cell body"/>
    <property type="evidence" value="ECO:0000314"/>
    <property type="project" value="MGI"/>
</dbReference>
<dbReference type="GO" id="GO:0046872">
    <property type="term" value="F:metal ion binding"/>
    <property type="evidence" value="ECO:0007669"/>
    <property type="project" value="UniProtKB-KW"/>
</dbReference>
<dbReference type="GO" id="GO:0004222">
    <property type="term" value="F:metalloendopeptidase activity"/>
    <property type="evidence" value="ECO:0007669"/>
    <property type="project" value="InterPro"/>
</dbReference>
<dbReference type="GO" id="GO:0006508">
    <property type="term" value="P:proteolysis"/>
    <property type="evidence" value="ECO:0007669"/>
    <property type="project" value="UniProtKB-KW"/>
</dbReference>
<dbReference type="CDD" id="cd04269">
    <property type="entry name" value="ZnMc_adamalysin_II_like"/>
    <property type="match status" value="1"/>
</dbReference>
<dbReference type="FunFam" id="3.40.390.10:FF:000002">
    <property type="entry name" value="Disintegrin and metalloproteinase domain-containing protein 22"/>
    <property type="match status" value="1"/>
</dbReference>
<dbReference type="FunFam" id="4.10.70.10:FF:000001">
    <property type="entry name" value="Disintegrin and metalloproteinase domain-containing protein 22"/>
    <property type="match status" value="1"/>
</dbReference>
<dbReference type="Gene3D" id="3.40.390.10">
    <property type="entry name" value="Collagenase (Catalytic Domain)"/>
    <property type="match status" value="1"/>
</dbReference>
<dbReference type="Gene3D" id="4.10.70.10">
    <property type="entry name" value="Disintegrin domain"/>
    <property type="match status" value="1"/>
</dbReference>
<dbReference type="InterPro" id="IPR006586">
    <property type="entry name" value="ADAM_Cys-rich"/>
</dbReference>
<dbReference type="InterPro" id="IPR018358">
    <property type="entry name" value="Disintegrin_CS"/>
</dbReference>
<dbReference type="InterPro" id="IPR001762">
    <property type="entry name" value="Disintegrin_dom"/>
</dbReference>
<dbReference type="InterPro" id="IPR036436">
    <property type="entry name" value="Disintegrin_dom_sf"/>
</dbReference>
<dbReference type="InterPro" id="IPR000742">
    <property type="entry name" value="EGF-like_dom"/>
</dbReference>
<dbReference type="InterPro" id="IPR024079">
    <property type="entry name" value="MetalloPept_cat_dom_sf"/>
</dbReference>
<dbReference type="InterPro" id="IPR001590">
    <property type="entry name" value="Peptidase_M12B"/>
</dbReference>
<dbReference type="InterPro" id="IPR002870">
    <property type="entry name" value="Peptidase_M12B_N"/>
</dbReference>
<dbReference type="InterPro" id="IPR034027">
    <property type="entry name" value="Reprolysin_adamalysin"/>
</dbReference>
<dbReference type="PANTHER" id="PTHR11905">
    <property type="entry name" value="ADAM A DISINTEGRIN AND METALLOPROTEASE DOMAIN"/>
    <property type="match status" value="1"/>
</dbReference>
<dbReference type="PANTHER" id="PTHR11905:SF116">
    <property type="entry name" value="DISINTEGRIN AND METALLOPROTEINASE DOMAIN-CONTAINING PROTEIN 21"/>
    <property type="match status" value="1"/>
</dbReference>
<dbReference type="Pfam" id="PF08516">
    <property type="entry name" value="ADAM_CR"/>
    <property type="match status" value="1"/>
</dbReference>
<dbReference type="Pfam" id="PF00200">
    <property type="entry name" value="Disintegrin"/>
    <property type="match status" value="1"/>
</dbReference>
<dbReference type="Pfam" id="PF01562">
    <property type="entry name" value="Pep_M12B_propep"/>
    <property type="match status" value="1"/>
</dbReference>
<dbReference type="Pfam" id="PF01421">
    <property type="entry name" value="Reprolysin"/>
    <property type="match status" value="1"/>
</dbReference>
<dbReference type="PRINTS" id="PR00289">
    <property type="entry name" value="DISINTEGRIN"/>
</dbReference>
<dbReference type="SMART" id="SM00608">
    <property type="entry name" value="ACR"/>
    <property type="match status" value="1"/>
</dbReference>
<dbReference type="SMART" id="SM00050">
    <property type="entry name" value="DISIN"/>
    <property type="match status" value="1"/>
</dbReference>
<dbReference type="SUPFAM" id="SSF57552">
    <property type="entry name" value="Blood coagulation inhibitor (disintegrin)"/>
    <property type="match status" value="1"/>
</dbReference>
<dbReference type="SUPFAM" id="SSF55486">
    <property type="entry name" value="Metalloproteases ('zincins'), catalytic domain"/>
    <property type="match status" value="1"/>
</dbReference>
<dbReference type="PROSITE" id="PS50215">
    <property type="entry name" value="ADAM_MEPRO"/>
    <property type="match status" value="1"/>
</dbReference>
<dbReference type="PROSITE" id="PS00427">
    <property type="entry name" value="DISINTEGRIN_1"/>
    <property type="match status" value="1"/>
</dbReference>
<dbReference type="PROSITE" id="PS50214">
    <property type="entry name" value="DISINTEGRIN_2"/>
    <property type="match status" value="1"/>
</dbReference>
<dbReference type="PROSITE" id="PS01186">
    <property type="entry name" value="EGF_2"/>
    <property type="match status" value="1"/>
</dbReference>
<dbReference type="PROSITE" id="PS50026">
    <property type="entry name" value="EGF_3"/>
    <property type="match status" value="1"/>
</dbReference>
<dbReference type="PROSITE" id="PS00142">
    <property type="entry name" value="ZINC_PROTEASE"/>
    <property type="match status" value="1"/>
</dbReference>
<gene>
    <name type="primary">Adam21</name>
    <name type="synonym">Adam31</name>
</gene>
<organism>
    <name type="scientific">Mus musculus</name>
    <name type="common">Mouse</name>
    <dbReference type="NCBI Taxonomy" id="10090"/>
    <lineage>
        <taxon>Eukaryota</taxon>
        <taxon>Metazoa</taxon>
        <taxon>Chordata</taxon>
        <taxon>Craniata</taxon>
        <taxon>Vertebrata</taxon>
        <taxon>Euteleostomi</taxon>
        <taxon>Mammalia</taxon>
        <taxon>Eutheria</taxon>
        <taxon>Euarchontoglires</taxon>
        <taxon>Glires</taxon>
        <taxon>Rodentia</taxon>
        <taxon>Myomorpha</taxon>
        <taxon>Muroidea</taxon>
        <taxon>Muridae</taxon>
        <taxon>Murinae</taxon>
        <taxon>Mus</taxon>
        <taxon>Mus</taxon>
    </lineage>
</organism>
<protein>
    <recommendedName>
        <fullName>Disintegrin and metalloproteinase domain-containing protein 21</fullName>
        <shortName>ADAM 21</shortName>
        <ecNumber>3.4.24.-</ecNumber>
    </recommendedName>
    <alternativeName>
        <fullName>Disintegrin and metalloproteinase domain-containing protein 31</fullName>
        <shortName>ADAM 31</shortName>
    </alternativeName>
</protein>
<feature type="signal peptide" evidence="2">
    <location>
        <begin position="1"/>
        <end position="39"/>
    </location>
</feature>
<feature type="propeptide" id="PRO_0000029110" evidence="2">
    <location>
        <begin position="40"/>
        <end position="209"/>
    </location>
</feature>
<feature type="chain" id="PRO_0000029111" description="Disintegrin and metalloproteinase domain-containing protein 21">
    <location>
        <begin position="210"/>
        <end position="729"/>
    </location>
</feature>
<feature type="topological domain" description="Extracellular" evidence="2">
    <location>
        <begin position="210"/>
        <end position="685"/>
    </location>
</feature>
<feature type="transmembrane region" description="Helical" evidence="2">
    <location>
        <begin position="686"/>
        <end position="706"/>
    </location>
</feature>
<feature type="topological domain" description="Cytoplasmic" evidence="2">
    <location>
        <begin position="707"/>
        <end position="729"/>
    </location>
</feature>
<feature type="domain" description="Peptidase M12B" evidence="5">
    <location>
        <begin position="212"/>
        <end position="402"/>
    </location>
</feature>
<feature type="domain" description="Disintegrin" evidence="3">
    <location>
        <begin position="410"/>
        <end position="496"/>
    </location>
</feature>
<feature type="domain" description="EGF-like" evidence="4">
    <location>
        <begin position="638"/>
        <end position="667"/>
    </location>
</feature>
<feature type="short sequence motif" description="Cysteine switch" evidence="1">
    <location>
        <begin position="176"/>
        <end position="183"/>
    </location>
</feature>
<feature type="active site" evidence="5 6">
    <location>
        <position position="346"/>
    </location>
</feature>
<feature type="binding site" description="in inhibited form" evidence="1">
    <location>
        <position position="178"/>
    </location>
    <ligand>
        <name>Zn(2+)</name>
        <dbReference type="ChEBI" id="CHEBI:29105"/>
        <note>catalytic</note>
    </ligand>
</feature>
<feature type="binding site" evidence="2">
    <location>
        <position position="345"/>
    </location>
    <ligand>
        <name>Zn(2+)</name>
        <dbReference type="ChEBI" id="CHEBI:29105"/>
        <note>catalytic</note>
    </ligand>
</feature>
<feature type="binding site" evidence="2">
    <location>
        <position position="349"/>
    </location>
    <ligand>
        <name>Zn(2+)</name>
        <dbReference type="ChEBI" id="CHEBI:29105"/>
        <note>catalytic</note>
    </ligand>
</feature>
<feature type="binding site" evidence="2">
    <location>
        <position position="355"/>
    </location>
    <ligand>
        <name>Zn(2+)</name>
        <dbReference type="ChEBI" id="CHEBI:29105"/>
        <note>catalytic</note>
    </ligand>
</feature>
<feature type="glycosylation site" description="N-linked (GlcNAc...) asparagine" evidence="2">
    <location>
        <position position="169"/>
    </location>
</feature>
<feature type="glycosylation site" description="N-linked (GlcNAc...) asparagine" evidence="2">
    <location>
        <position position="231"/>
    </location>
</feature>
<feature type="glycosylation site" description="N-linked (GlcNAc...) asparagine" evidence="2">
    <location>
        <position position="381"/>
    </location>
</feature>
<feature type="glycosylation site" description="N-linked (GlcNAc...) asparagine" evidence="2">
    <location>
        <position position="441"/>
    </location>
</feature>
<feature type="glycosylation site" description="N-linked (GlcNAc...) asparagine" evidence="2">
    <location>
        <position position="482"/>
    </location>
</feature>
<feature type="disulfide bond" evidence="1">
    <location>
        <begin position="320"/>
        <end position="397"/>
    </location>
</feature>
<feature type="disulfide bond" evidence="1">
    <location>
        <begin position="360"/>
        <end position="382"/>
    </location>
</feature>
<feature type="disulfide bond" evidence="1">
    <location>
        <begin position="362"/>
        <end position="367"/>
    </location>
</feature>
<feature type="disulfide bond" evidence="1">
    <location>
        <begin position="468"/>
        <end position="488"/>
    </location>
</feature>
<feature type="disulfide bond" evidence="1">
    <location>
        <begin position="638"/>
        <end position="649"/>
    </location>
</feature>
<feature type="disulfide bond" evidence="1">
    <location>
        <begin position="643"/>
        <end position="655"/>
    </location>
</feature>
<feature type="disulfide bond" evidence="1">
    <location>
        <begin position="657"/>
        <end position="666"/>
    </location>
</feature>